<reference key="1">
    <citation type="journal article" date="2005" name="Science">
        <title>Life at depth: Photobacterium profundum genome sequence and expression analysis.</title>
        <authorList>
            <person name="Vezzi A."/>
            <person name="Campanaro S."/>
            <person name="D'Angelo M."/>
            <person name="Simonato F."/>
            <person name="Vitulo N."/>
            <person name="Lauro F.M."/>
            <person name="Cestaro A."/>
            <person name="Malacrida G."/>
            <person name="Simionati B."/>
            <person name="Cannata N."/>
            <person name="Romualdi C."/>
            <person name="Bartlett D.H."/>
            <person name="Valle G."/>
        </authorList>
    </citation>
    <scope>NUCLEOTIDE SEQUENCE [LARGE SCALE GENOMIC DNA]</scope>
    <source>
        <strain>ATCC BAA-1253 / SS9</strain>
    </source>
</reference>
<accession>Q6LQR4</accession>
<gene>
    <name evidence="1" type="primary">azoR1</name>
    <name type="ordered locus">PBPRA1958</name>
</gene>
<organism>
    <name type="scientific">Photobacterium profundum (strain SS9)</name>
    <dbReference type="NCBI Taxonomy" id="298386"/>
    <lineage>
        <taxon>Bacteria</taxon>
        <taxon>Pseudomonadati</taxon>
        <taxon>Pseudomonadota</taxon>
        <taxon>Gammaproteobacteria</taxon>
        <taxon>Vibrionales</taxon>
        <taxon>Vibrionaceae</taxon>
        <taxon>Photobacterium</taxon>
    </lineage>
</organism>
<evidence type="ECO:0000255" key="1">
    <source>
        <dbReference type="HAMAP-Rule" id="MF_01216"/>
    </source>
</evidence>
<name>AZOR1_PHOPR</name>
<keyword id="KW-0285">Flavoprotein</keyword>
<keyword id="KW-0288">FMN</keyword>
<keyword id="KW-0520">NAD</keyword>
<keyword id="KW-0560">Oxidoreductase</keyword>
<keyword id="KW-1185">Reference proteome</keyword>
<comment type="function">
    <text evidence="1">Quinone reductase that provides resistance to thiol-specific stress caused by electrophilic quinones.</text>
</comment>
<comment type="function">
    <text evidence="1">Also exhibits azoreductase activity. Catalyzes the reductive cleavage of the azo bond in aromatic azo compounds to the corresponding amines.</text>
</comment>
<comment type="catalytic activity">
    <reaction evidence="1">
        <text>2 a quinone + NADH + H(+) = 2 a 1,4-benzosemiquinone + NAD(+)</text>
        <dbReference type="Rhea" id="RHEA:65952"/>
        <dbReference type="ChEBI" id="CHEBI:15378"/>
        <dbReference type="ChEBI" id="CHEBI:57540"/>
        <dbReference type="ChEBI" id="CHEBI:57945"/>
        <dbReference type="ChEBI" id="CHEBI:132124"/>
        <dbReference type="ChEBI" id="CHEBI:134225"/>
    </reaction>
</comment>
<comment type="catalytic activity">
    <reaction evidence="1">
        <text>N,N-dimethyl-1,4-phenylenediamine + anthranilate + 2 NAD(+) = 2-(4-dimethylaminophenyl)diazenylbenzoate + 2 NADH + 2 H(+)</text>
        <dbReference type="Rhea" id="RHEA:55872"/>
        <dbReference type="ChEBI" id="CHEBI:15378"/>
        <dbReference type="ChEBI" id="CHEBI:15783"/>
        <dbReference type="ChEBI" id="CHEBI:16567"/>
        <dbReference type="ChEBI" id="CHEBI:57540"/>
        <dbReference type="ChEBI" id="CHEBI:57945"/>
        <dbReference type="ChEBI" id="CHEBI:71579"/>
        <dbReference type="EC" id="1.7.1.17"/>
    </reaction>
</comment>
<comment type="cofactor">
    <cofactor evidence="1">
        <name>FMN</name>
        <dbReference type="ChEBI" id="CHEBI:58210"/>
    </cofactor>
    <text evidence="1">Binds 1 FMN per subunit.</text>
</comment>
<comment type="subunit">
    <text evidence="1">Homodimer.</text>
</comment>
<comment type="similarity">
    <text evidence="1">Belongs to the azoreductase type 1 family.</text>
</comment>
<protein>
    <recommendedName>
        <fullName evidence="1">FMN-dependent NADH:quinone oxidoreductase 1</fullName>
        <ecNumber evidence="1">1.6.5.-</ecNumber>
    </recommendedName>
    <alternativeName>
        <fullName evidence="1">Azo-dye reductase 1</fullName>
    </alternativeName>
    <alternativeName>
        <fullName evidence="1">FMN-dependent NADH-azo compound oxidoreductase 1</fullName>
    </alternativeName>
    <alternativeName>
        <fullName evidence="1">FMN-dependent NADH-azoreductase 1</fullName>
        <ecNumber evidence="1">1.7.1.17</ecNumber>
    </alternativeName>
</protein>
<feature type="chain" id="PRO_0000245942" description="FMN-dependent NADH:quinone oxidoreductase 1">
    <location>
        <begin position="1"/>
        <end position="197"/>
    </location>
</feature>
<feature type="binding site" evidence="1">
    <location>
        <position position="10"/>
    </location>
    <ligand>
        <name>FMN</name>
        <dbReference type="ChEBI" id="CHEBI:58210"/>
    </ligand>
</feature>
<feature type="binding site" evidence="1">
    <location>
        <begin position="16"/>
        <end position="18"/>
    </location>
    <ligand>
        <name>FMN</name>
        <dbReference type="ChEBI" id="CHEBI:58210"/>
    </ligand>
</feature>
<feature type="binding site" evidence="1">
    <location>
        <begin position="93"/>
        <end position="96"/>
    </location>
    <ligand>
        <name>FMN</name>
        <dbReference type="ChEBI" id="CHEBI:58210"/>
    </ligand>
</feature>
<feature type="binding site" evidence="1">
    <location>
        <begin position="137"/>
        <end position="140"/>
    </location>
    <ligand>
        <name>FMN</name>
        <dbReference type="ChEBI" id="CHEBI:58210"/>
    </ligand>
</feature>
<dbReference type="EC" id="1.6.5.-" evidence="1"/>
<dbReference type="EC" id="1.7.1.17" evidence="1"/>
<dbReference type="EMBL" id="CR378669">
    <property type="protein sequence ID" value="CAG20362.1"/>
    <property type="molecule type" value="Genomic_DNA"/>
</dbReference>
<dbReference type="RefSeq" id="WP_011218664.1">
    <property type="nucleotide sequence ID" value="NC_006370.1"/>
</dbReference>
<dbReference type="SMR" id="Q6LQR4"/>
<dbReference type="STRING" id="298386.PBPRA1958"/>
<dbReference type="KEGG" id="ppr:PBPRA1958"/>
<dbReference type="eggNOG" id="COG1182">
    <property type="taxonomic scope" value="Bacteria"/>
</dbReference>
<dbReference type="HOGENOM" id="CLU_088964_0_0_6"/>
<dbReference type="Proteomes" id="UP000000593">
    <property type="component" value="Chromosome 1"/>
</dbReference>
<dbReference type="GO" id="GO:0009055">
    <property type="term" value="F:electron transfer activity"/>
    <property type="evidence" value="ECO:0007669"/>
    <property type="project" value="UniProtKB-UniRule"/>
</dbReference>
<dbReference type="GO" id="GO:0010181">
    <property type="term" value="F:FMN binding"/>
    <property type="evidence" value="ECO:0007669"/>
    <property type="project" value="UniProtKB-UniRule"/>
</dbReference>
<dbReference type="GO" id="GO:0016652">
    <property type="term" value="F:oxidoreductase activity, acting on NAD(P)H as acceptor"/>
    <property type="evidence" value="ECO:0007669"/>
    <property type="project" value="UniProtKB-UniRule"/>
</dbReference>
<dbReference type="GO" id="GO:0016655">
    <property type="term" value="F:oxidoreductase activity, acting on NAD(P)H, quinone or similar compound as acceptor"/>
    <property type="evidence" value="ECO:0007669"/>
    <property type="project" value="InterPro"/>
</dbReference>
<dbReference type="Gene3D" id="3.40.50.360">
    <property type="match status" value="1"/>
</dbReference>
<dbReference type="HAMAP" id="MF_01216">
    <property type="entry name" value="Azoreductase_type1"/>
    <property type="match status" value="1"/>
</dbReference>
<dbReference type="InterPro" id="IPR003680">
    <property type="entry name" value="Flavodoxin_fold"/>
</dbReference>
<dbReference type="InterPro" id="IPR029039">
    <property type="entry name" value="Flavoprotein-like_sf"/>
</dbReference>
<dbReference type="InterPro" id="IPR050104">
    <property type="entry name" value="FMN-dep_NADH:Q_OxRdtase_AzoR1"/>
</dbReference>
<dbReference type="InterPro" id="IPR023048">
    <property type="entry name" value="NADH:quinone_OxRdtase_FMN_depd"/>
</dbReference>
<dbReference type="PANTHER" id="PTHR43741">
    <property type="entry name" value="FMN-DEPENDENT NADH-AZOREDUCTASE 1"/>
    <property type="match status" value="1"/>
</dbReference>
<dbReference type="PANTHER" id="PTHR43741:SF2">
    <property type="entry name" value="FMN-DEPENDENT NADH:QUINONE OXIDOREDUCTASE"/>
    <property type="match status" value="1"/>
</dbReference>
<dbReference type="Pfam" id="PF02525">
    <property type="entry name" value="Flavodoxin_2"/>
    <property type="match status" value="1"/>
</dbReference>
<dbReference type="SUPFAM" id="SSF52218">
    <property type="entry name" value="Flavoproteins"/>
    <property type="match status" value="1"/>
</dbReference>
<proteinExistence type="inferred from homology"/>
<sequence>MSNVLVLKSSILGDYSQSNGLIDHLVSSWGDSVSSVIERDLVATPIPVLDGEIAGGLRGGDTLTARQEEALALSDMLINELQNSDTIVIAAPMYNFSVPTQLKNWFDIIARAGVTFSYTENGPVGLITGKKVIVVTTRGGMHKDGPTDTMVPYLKTILGFIGLTDVEFVYGEALAMGEEMAAKGITNAKSALEKISA</sequence>